<name>BTSS_ECOLI</name>
<protein>
    <recommendedName>
        <fullName evidence="8">Sensor histidine kinase BtsS</fullName>
        <ecNumber>2.7.13.3</ecNumber>
    </recommendedName>
</protein>
<comment type="function">
    <text evidence="2 4 5 6">Member of the two-component regulatory system BtsS/BtsR, which is part of a nutrient-sensing regulatory network composed of BtsS/BtsR, the low-affinity pyruvate signaling system YpdA/YpdB and their respective target proteins, BtsT and YhjX. Responds to depletion of nutrients, specifically serine, and the concomitant presence of extracellular pyruvate. BtsS is a high-affinity receptor for extracellular pyruvate that activates BtsR by phosphorylation. Activation of the BtsS/BtsR signaling cascade also suppresses YpdA/YpdB-mediated yhjX induction.</text>
</comment>
<comment type="catalytic activity">
    <reaction evidence="8">
        <text>ATP + protein L-histidine = ADP + protein N-phospho-L-histidine.</text>
        <dbReference type="EC" id="2.7.13.3"/>
    </reaction>
</comment>
<comment type="subunit">
    <text evidence="5">Interacts with BtsT and YhjX.</text>
</comment>
<comment type="subcellular location">
    <subcellularLocation>
        <location evidence="3">Cell inner membrane</location>
        <topology evidence="1">Multi-pass membrane protein</topology>
    </subcellularLocation>
</comment>
<comment type="PTM">
    <text evidence="2">Autophosphorylated.</text>
</comment>
<comment type="disruption phenotype">
    <text evidence="4">Deletion of btsSR has no obvious phenotypic effect under the conditions tested.</text>
</comment>
<keyword id="KW-0067">ATP-binding</keyword>
<keyword id="KW-0997">Cell inner membrane</keyword>
<keyword id="KW-1003">Cell membrane</keyword>
<keyword id="KW-0418">Kinase</keyword>
<keyword id="KW-0472">Membrane</keyword>
<keyword id="KW-0547">Nucleotide-binding</keyword>
<keyword id="KW-0597">Phosphoprotein</keyword>
<keyword id="KW-1185">Reference proteome</keyword>
<keyword id="KW-0808">Transferase</keyword>
<keyword id="KW-0812">Transmembrane</keyword>
<keyword id="KW-1133">Transmembrane helix</keyword>
<keyword id="KW-0902">Two-component regulatory system</keyword>
<dbReference type="EC" id="2.7.13.3"/>
<dbReference type="EMBL" id="U00007">
    <property type="protein sequence ID" value="AAA60489.1"/>
    <property type="molecule type" value="Genomic_DNA"/>
</dbReference>
<dbReference type="EMBL" id="U00096">
    <property type="protein sequence ID" value="AAC75187.1"/>
    <property type="molecule type" value="Genomic_DNA"/>
</dbReference>
<dbReference type="EMBL" id="AP009048">
    <property type="protein sequence ID" value="BAE76602.1"/>
    <property type="molecule type" value="Genomic_DNA"/>
</dbReference>
<dbReference type="PIR" id="E64980">
    <property type="entry name" value="E64980"/>
</dbReference>
<dbReference type="RefSeq" id="NP_416630.1">
    <property type="nucleotide sequence ID" value="NC_000913.3"/>
</dbReference>
<dbReference type="RefSeq" id="WP_001295431.1">
    <property type="nucleotide sequence ID" value="NZ_STEB01000002.1"/>
</dbReference>
<dbReference type="SMR" id="P0AD14"/>
<dbReference type="BioGRID" id="4260444">
    <property type="interactions" value="256"/>
</dbReference>
<dbReference type="DIP" id="DIP-11909N"/>
<dbReference type="FunCoup" id="P0AD14">
    <property type="interactions" value="51"/>
</dbReference>
<dbReference type="STRING" id="511145.b2126"/>
<dbReference type="jPOST" id="P0AD14"/>
<dbReference type="PaxDb" id="511145-b2126"/>
<dbReference type="EnsemblBacteria" id="AAC75187">
    <property type="protein sequence ID" value="AAC75187"/>
    <property type="gene ID" value="b2126"/>
</dbReference>
<dbReference type="GeneID" id="75206372"/>
<dbReference type="GeneID" id="949027"/>
<dbReference type="KEGG" id="ecj:JW5353"/>
<dbReference type="KEGG" id="eco:b2126"/>
<dbReference type="KEGG" id="ecoc:C3026_11920"/>
<dbReference type="PATRIC" id="fig|1411691.4.peg.119"/>
<dbReference type="EchoBASE" id="EB1945"/>
<dbReference type="eggNOG" id="COG3275">
    <property type="taxonomic scope" value="Bacteria"/>
</dbReference>
<dbReference type="HOGENOM" id="CLU_020473_3_3_6"/>
<dbReference type="InParanoid" id="P0AD14"/>
<dbReference type="OMA" id="SHFFRSN"/>
<dbReference type="OrthoDB" id="2514702at2"/>
<dbReference type="PhylomeDB" id="P0AD14"/>
<dbReference type="BioCyc" id="EcoCyc:EG12007-MONOMER"/>
<dbReference type="BioCyc" id="MetaCyc:EG12007-MONOMER"/>
<dbReference type="PRO" id="PR:P0AD14"/>
<dbReference type="Proteomes" id="UP000000625">
    <property type="component" value="Chromosome"/>
</dbReference>
<dbReference type="GO" id="GO:0005886">
    <property type="term" value="C:plasma membrane"/>
    <property type="evidence" value="ECO:0000314"/>
    <property type="project" value="EcoCyc"/>
</dbReference>
<dbReference type="GO" id="GO:0005524">
    <property type="term" value="F:ATP binding"/>
    <property type="evidence" value="ECO:0007669"/>
    <property type="project" value="UniProtKB-KW"/>
</dbReference>
<dbReference type="GO" id="GO:0033293">
    <property type="term" value="F:monocarboxylic acid binding"/>
    <property type="evidence" value="ECO:0000314"/>
    <property type="project" value="EcoCyc"/>
</dbReference>
<dbReference type="GO" id="GO:0000155">
    <property type="term" value="F:phosphorelay sensor kinase activity"/>
    <property type="evidence" value="ECO:0000318"/>
    <property type="project" value="GO_Central"/>
</dbReference>
<dbReference type="GO" id="GO:0071555">
    <property type="term" value="P:cell wall organization"/>
    <property type="evidence" value="ECO:0007669"/>
    <property type="project" value="InterPro"/>
</dbReference>
<dbReference type="GO" id="GO:0031667">
    <property type="term" value="P:response to nutrient levels"/>
    <property type="evidence" value="ECO:0000314"/>
    <property type="project" value="EcoCyc"/>
</dbReference>
<dbReference type="GO" id="GO:0007165">
    <property type="term" value="P:signal transduction"/>
    <property type="evidence" value="ECO:0000315"/>
    <property type="project" value="EcoCyc"/>
</dbReference>
<dbReference type="CDD" id="cd16956">
    <property type="entry name" value="HATPase_YehU-like"/>
    <property type="match status" value="1"/>
</dbReference>
<dbReference type="FunFam" id="3.30.450.40:FF:000013">
    <property type="entry name" value="Sensor histidine kinase YehU"/>
    <property type="match status" value="1"/>
</dbReference>
<dbReference type="Gene3D" id="3.30.450.40">
    <property type="match status" value="1"/>
</dbReference>
<dbReference type="Gene3D" id="3.30.565.10">
    <property type="entry name" value="Histidine kinase-like ATPase, C-terminal domain"/>
    <property type="match status" value="1"/>
</dbReference>
<dbReference type="InterPro" id="IPR050640">
    <property type="entry name" value="Bact_2-comp_sensor_kinase"/>
</dbReference>
<dbReference type="InterPro" id="IPR003018">
    <property type="entry name" value="GAF"/>
</dbReference>
<dbReference type="InterPro" id="IPR029016">
    <property type="entry name" value="GAF-like_dom_sf"/>
</dbReference>
<dbReference type="InterPro" id="IPR036890">
    <property type="entry name" value="HATPase_C_sf"/>
</dbReference>
<dbReference type="InterPro" id="IPR010559">
    <property type="entry name" value="Sig_transdc_His_kin_internal"/>
</dbReference>
<dbReference type="InterPro" id="IPR011620">
    <property type="entry name" value="Sig_transdc_His_kinase_LytS_TM"/>
</dbReference>
<dbReference type="PANTHER" id="PTHR34220:SF10">
    <property type="entry name" value="SENSOR HISTIDINE KINASE BTSS"/>
    <property type="match status" value="1"/>
</dbReference>
<dbReference type="PANTHER" id="PTHR34220">
    <property type="entry name" value="SENSOR HISTIDINE KINASE YPDA"/>
    <property type="match status" value="1"/>
</dbReference>
<dbReference type="Pfam" id="PF07694">
    <property type="entry name" value="5TM-5TMR_LYT"/>
    <property type="match status" value="1"/>
</dbReference>
<dbReference type="Pfam" id="PF13185">
    <property type="entry name" value="GAF_2"/>
    <property type="match status" value="1"/>
</dbReference>
<dbReference type="Pfam" id="PF06580">
    <property type="entry name" value="His_kinase"/>
    <property type="match status" value="1"/>
</dbReference>
<dbReference type="SMART" id="SM00065">
    <property type="entry name" value="GAF"/>
    <property type="match status" value="1"/>
</dbReference>
<dbReference type="SUPFAM" id="SSF55874">
    <property type="entry name" value="ATPase domain of HSP90 chaperone/DNA topoisomerase II/histidine kinase"/>
    <property type="match status" value="1"/>
</dbReference>
<dbReference type="SUPFAM" id="SSF55781">
    <property type="entry name" value="GAF domain-like"/>
    <property type="match status" value="1"/>
</dbReference>
<organism>
    <name type="scientific">Escherichia coli (strain K12)</name>
    <dbReference type="NCBI Taxonomy" id="83333"/>
    <lineage>
        <taxon>Bacteria</taxon>
        <taxon>Pseudomonadati</taxon>
        <taxon>Pseudomonadota</taxon>
        <taxon>Gammaproteobacteria</taxon>
        <taxon>Enterobacterales</taxon>
        <taxon>Enterobacteriaceae</taxon>
        <taxon>Escherichia</taxon>
    </lineage>
</organism>
<gene>
    <name evidence="7" type="primary">btsS</name>
    <name type="synonym">yehU</name>
    <name type="ordered locus">b2126</name>
    <name type="ordered locus">JW5353</name>
</gene>
<evidence type="ECO:0000255" key="1"/>
<evidence type="ECO:0000269" key="2">
    <source>
    </source>
</evidence>
<evidence type="ECO:0000269" key="3">
    <source>
    </source>
</evidence>
<evidence type="ECO:0000269" key="4">
    <source>
    </source>
</evidence>
<evidence type="ECO:0000269" key="5">
    <source>
    </source>
</evidence>
<evidence type="ECO:0000269" key="6">
    <source>
    </source>
</evidence>
<evidence type="ECO:0000303" key="7">
    <source>
    </source>
</evidence>
<evidence type="ECO:0000305" key="8"/>
<evidence type="ECO:0000305" key="9">
    <source>
    </source>
</evidence>
<accession>P0AD14</accession>
<accession>P33357</accession>
<accession>P76434</accession>
<accession>Q2MAV4</accession>
<feature type="chain" id="PRO_0000013870" description="Sensor histidine kinase BtsS">
    <location>
        <begin position="1"/>
        <end position="561"/>
    </location>
</feature>
<feature type="topological domain" description="Cytoplasmic" evidence="9">
    <location>
        <begin position="1"/>
        <end position="3"/>
    </location>
</feature>
<feature type="transmembrane region" description="Helical" evidence="1">
    <location>
        <begin position="4"/>
        <end position="24"/>
    </location>
</feature>
<feature type="topological domain" description="Periplasmic" evidence="9">
    <location>
        <begin position="25"/>
        <end position="43"/>
    </location>
</feature>
<feature type="transmembrane region" description="Helical" evidence="1">
    <location>
        <begin position="44"/>
        <end position="64"/>
    </location>
</feature>
<feature type="topological domain" description="Cytoplasmic" evidence="9">
    <location>
        <begin position="65"/>
        <end position="72"/>
    </location>
</feature>
<feature type="transmembrane region" description="Helical" evidence="1">
    <location>
        <begin position="73"/>
        <end position="93"/>
    </location>
</feature>
<feature type="topological domain" description="Periplasmic" evidence="9">
    <location>
        <begin position="94"/>
        <end position="108"/>
    </location>
</feature>
<feature type="transmembrane region" description="Helical" evidence="1">
    <location>
        <begin position="109"/>
        <end position="129"/>
    </location>
</feature>
<feature type="topological domain" description="Cytoplasmic" evidence="9">
    <location>
        <begin position="130"/>
        <end position="140"/>
    </location>
</feature>
<feature type="transmembrane region" description="Helical" evidence="1">
    <location>
        <begin position="141"/>
        <end position="161"/>
    </location>
</feature>
<feature type="topological domain" description="Periplasmic" evidence="9">
    <location>
        <begin position="162"/>
        <end position="170"/>
    </location>
</feature>
<feature type="transmembrane region" description="Helical" evidence="1">
    <location>
        <begin position="171"/>
        <end position="191"/>
    </location>
</feature>
<feature type="topological domain" description="Cytoplasmic" evidence="3">
    <location>
        <begin position="192"/>
        <end position="561"/>
    </location>
</feature>
<feature type="domain" description="Histidine kinase">
    <location>
        <begin position="354"/>
        <end position="559"/>
    </location>
</feature>
<feature type="mutagenesis site" description="Lack of activity." evidence="4">
    <original>H</original>
    <variation>Q</variation>
    <location>
        <position position="382"/>
    </location>
</feature>
<feature type="sequence conflict" description="In Ref. 1; AAA60489." evidence="8" ref="1">
    <original>IA</original>
    <variation>MP</variation>
    <location>
        <begin position="175"/>
        <end position="176"/>
    </location>
</feature>
<proteinExistence type="evidence at protein level"/>
<sequence>MYDFNLVLLLLQQMCVFLVIAWLMSKTPLFIPLMQVTVRLPHKFLCYIVFSIFCIMGTWFGLHIDDSIANTRAIGAVMGGLLGGPVVGGLVGLTGGLHRYSMGGMTALSCMISTIVEGLLGGLVHSILIRRGRTDKVFNPITAGAVTFVAEMVQMLIILAIARPYEDAVRLVSNIAAPMMVTNTVGAALFMRILLDKRAMFEKYTSAFSATALKVAASTEGILRQGFNEVNSMKVAQVLYQELDIGAVAITDREKLLAFTGIGDDHHLPGKPISSTYTLKAIETGEVVYADGNEVPYRCSLHPQCKLGSTLVIPLRGENQRVMGTIKLYEAKNRLFSSINRTLGEGIAQLLSAQILAGQYERQKAMLTQSEIKLLHAQVNPHFLFNALNTIKAVIRRDSEQASQLVQYLSTFFRKNLKRPSEFVTLADEIEHVNAYLQIEKARFQSRLQVNIAIPQELSQQQLPAFTLQPIVENAIKHGTSQLLDTGRVAISARREGQHLMLEIEDNAGLYQPVTNASGLGMNLVDKRLRERFGDDYGISVACEPDSYTRITLRLPWRDEA</sequence>
<reference key="1">
    <citation type="submission" date="1993-10" db="EMBL/GenBank/DDBJ databases">
        <authorList>
            <person name="Richterich P."/>
            <person name="Lakey N."/>
            <person name="Gryan G."/>
            <person name="Jaehn L."/>
            <person name="Mintz L."/>
            <person name="Robison K."/>
            <person name="Church G.M."/>
        </authorList>
    </citation>
    <scope>NUCLEOTIDE SEQUENCE [GENOMIC DNA]</scope>
    <source>
        <strain>K12 / BHB2600</strain>
    </source>
</reference>
<reference key="2">
    <citation type="journal article" date="1997" name="Science">
        <title>The complete genome sequence of Escherichia coli K-12.</title>
        <authorList>
            <person name="Blattner F.R."/>
            <person name="Plunkett G. III"/>
            <person name="Bloch C.A."/>
            <person name="Perna N.T."/>
            <person name="Burland V."/>
            <person name="Riley M."/>
            <person name="Collado-Vides J."/>
            <person name="Glasner J.D."/>
            <person name="Rode C.K."/>
            <person name="Mayhew G.F."/>
            <person name="Gregor J."/>
            <person name="Davis N.W."/>
            <person name="Kirkpatrick H.A."/>
            <person name="Goeden M.A."/>
            <person name="Rose D.J."/>
            <person name="Mau B."/>
            <person name="Shao Y."/>
        </authorList>
    </citation>
    <scope>NUCLEOTIDE SEQUENCE [LARGE SCALE GENOMIC DNA]</scope>
    <source>
        <strain>K12 / MG1655 / ATCC 47076</strain>
    </source>
</reference>
<reference key="3">
    <citation type="journal article" date="2006" name="Mol. Syst. Biol.">
        <title>Highly accurate genome sequences of Escherichia coli K-12 strains MG1655 and W3110.</title>
        <authorList>
            <person name="Hayashi K."/>
            <person name="Morooka N."/>
            <person name="Yamamoto Y."/>
            <person name="Fujita K."/>
            <person name="Isono K."/>
            <person name="Choi S."/>
            <person name="Ohtsubo E."/>
            <person name="Baba T."/>
            <person name="Wanner B.L."/>
            <person name="Mori H."/>
            <person name="Horiuchi T."/>
        </authorList>
    </citation>
    <scope>NUCLEOTIDE SEQUENCE [LARGE SCALE GENOMIC DNA]</scope>
    <source>
        <strain>K12 / W3110 / ATCC 27325 / DSM 5911</strain>
    </source>
</reference>
<reference key="4">
    <citation type="journal article" date="2005" name="J. Biol. Chem.">
        <title>Functional characterization in vitro of all two-component signal transduction systems from Escherichia coli.</title>
        <authorList>
            <person name="Yamamoto K."/>
            <person name="Hirao K."/>
            <person name="Oshima T."/>
            <person name="Aiba H."/>
            <person name="Utsumi R."/>
            <person name="Ishihama A."/>
        </authorList>
    </citation>
    <scope>FUNCTION</scope>
    <scope>AUTOPHOSPHORYLATION</scope>
    <source>
        <strain>K12 / W3110 / ATCC 27325 / DSM 5911</strain>
    </source>
</reference>
<reference key="5">
    <citation type="journal article" date="2005" name="Science">
        <title>Global topology analysis of the Escherichia coli inner membrane proteome.</title>
        <authorList>
            <person name="Daley D.O."/>
            <person name="Rapp M."/>
            <person name="Granseth E."/>
            <person name="Melen K."/>
            <person name="Drew D."/>
            <person name="von Heijne G."/>
        </authorList>
    </citation>
    <scope>SUBCELLULAR LOCATION</scope>
    <scope>TOPOLOGY [LARGE SCALE ANALYSIS]</scope>
    <source>
        <strain>K12 / MG1655 / ATCC 47076</strain>
    </source>
</reference>
<reference key="6">
    <citation type="journal article" date="2012" name="J. Bacteriol.">
        <title>First insights into the unexplored two-component system YehU/YehT in Escherichia coli.</title>
        <authorList>
            <person name="Kraxenberger T."/>
            <person name="Fried L."/>
            <person name="Behr S."/>
            <person name="Jung K."/>
        </authorList>
    </citation>
    <scope>FUNCTION</scope>
    <scope>DISRUPTION PHENOTYPE</scope>
    <scope>MUTAGENESIS OF HIS-382</scope>
    <source>
        <strain>K12 / MG1655 / ATCC 47076</strain>
    </source>
</reference>
<reference key="7">
    <citation type="journal article" date="2014" name="J. Bacteriol.">
        <title>Identification of a novel nutrient-sensing histidine kinase/response regulator network in Escherichia coli.</title>
        <authorList>
            <person name="Behr S."/>
            <person name="Fried L."/>
            <person name="Jung K."/>
        </authorList>
    </citation>
    <scope>FUNCTION</scope>
    <scope>INTERACTION WITH BTST AND YHJX</scope>
    <source>
        <strain>K12 / MG1655 / ATCC 47076</strain>
    </source>
</reference>
<reference key="8">
    <citation type="journal article" date="2017" name="Sci. Rep.">
        <title>Identification of a high-affinity pyruvate receptor in Escherichia coli.</title>
        <authorList>
            <person name="Behr S."/>
            <person name="Kristoficova I."/>
            <person name="Witting M."/>
            <person name="Breland E.J."/>
            <person name="Eberly A.R."/>
            <person name="Sachs C."/>
            <person name="Schmitt-Kopplin P."/>
            <person name="Hadjifrangiskou M."/>
            <person name="Jung K."/>
        </authorList>
    </citation>
    <scope>FUNCTION</scope>
    <source>
        <strain>K12 / MG1655 / ATCC 47076</strain>
    </source>
</reference>